<organism>
    <name type="scientific">Scolopendra morsitans</name>
    <name type="common">Tanzanian blue ringleg centipede</name>
    <dbReference type="NCBI Taxonomy" id="943129"/>
    <lineage>
        <taxon>Eukaryota</taxon>
        <taxon>Metazoa</taxon>
        <taxon>Ecdysozoa</taxon>
        <taxon>Arthropoda</taxon>
        <taxon>Myriapoda</taxon>
        <taxon>Chilopoda</taxon>
        <taxon>Pleurostigmophora</taxon>
        <taxon>Scolopendromorpha</taxon>
        <taxon>Scolopendridae</taxon>
        <taxon>Scolopendra</taxon>
    </lineage>
</organism>
<keyword id="KW-1015">Disulfide bond</keyword>
<keyword id="KW-0964">Secreted</keyword>
<keyword id="KW-0732">Signal</keyword>
<keyword id="KW-0800">Toxin</keyword>
<dbReference type="SMR" id="P0DQC2"/>
<dbReference type="GO" id="GO:0005576">
    <property type="term" value="C:extracellular region"/>
    <property type="evidence" value="ECO:0007669"/>
    <property type="project" value="UniProtKB-SubCell"/>
</dbReference>
<dbReference type="GO" id="GO:0090729">
    <property type="term" value="F:toxin activity"/>
    <property type="evidence" value="ECO:0007669"/>
    <property type="project" value="UniProtKB-KW"/>
</dbReference>
<name>TXF3A_SCOMO</name>
<feature type="signal peptide" evidence="1">
    <location>
        <begin position="1"/>
        <end position="23"/>
    </location>
</feature>
<feature type="chain" id="PRO_0000446797" description="U-scoloptoxin(15)-Sm3a" evidence="3">
    <location>
        <begin position="24"/>
        <end position="73"/>
    </location>
</feature>
<comment type="subcellular location">
    <subcellularLocation>
        <location evidence="4">Secreted</location>
    </subcellularLocation>
</comment>
<comment type="tissue specificity">
    <text evidence="4">Expressed by the venom gland.</text>
</comment>
<comment type="PTM">
    <text evidence="3">Contains 2 disulfide bonds.</text>
</comment>
<comment type="similarity">
    <text evidence="3">Belongs to the scoloptoxin-15 family.</text>
</comment>
<comment type="caution">
    <text evidence="4">All S.morsitans family members described in 'Undeheim et al., 2014' have not been imported into UniProtKB. Please, refer to this paper to access them.</text>
</comment>
<comment type="online information" name="National Center for Biotechnology Information (NCBI)">
    <link uri="https://www.ncbi.nlm.nih.gov/nuccore/GASH01000155"/>
</comment>
<protein>
    <recommendedName>
        <fullName evidence="2">U-scoloptoxin(15)-Sm3a</fullName>
        <shortName evidence="2">U-SLPTX(15)-Sm3a</shortName>
    </recommendedName>
</protein>
<accession>P0DQC2</accession>
<evidence type="ECO:0000255" key="1"/>
<evidence type="ECO:0000303" key="2">
    <source>
    </source>
</evidence>
<evidence type="ECO:0000305" key="3"/>
<evidence type="ECO:0000305" key="4">
    <source>
    </source>
</evidence>
<sequence>MERKVFLLLFVIVLLTLPGFMSAAKKEIPYKRQKFPKKSQCIEACANALTNGDKSKITDVKSRFYKCICYYNP</sequence>
<reference key="1">
    <citation type="journal article" date="2014" name="Mol. Biol. Evol.">
        <title>Clawing through evolution: toxin diversification and convergence in the ancient lineage Chilopoda (centipedes).</title>
        <authorList>
            <person name="Undheim E.A."/>
            <person name="Jones A."/>
            <person name="Clauser K.R."/>
            <person name="Holland J.W."/>
            <person name="Pineda S.S."/>
            <person name="King G.F."/>
            <person name="Fry B.G."/>
        </authorList>
    </citation>
    <scope>NUCLEOTIDE SEQUENCE [MRNA]</scope>
    <scope>NOMENCLATURE</scope>
    <source>
        <tissue>Venom gland</tissue>
    </source>
</reference>
<proteinExistence type="inferred from homology"/>